<organism>
    <name type="scientific">Caenorhabditis elegans</name>
    <dbReference type="NCBI Taxonomy" id="6239"/>
    <lineage>
        <taxon>Eukaryota</taxon>
        <taxon>Metazoa</taxon>
        <taxon>Ecdysozoa</taxon>
        <taxon>Nematoda</taxon>
        <taxon>Chromadorea</taxon>
        <taxon>Rhabditida</taxon>
        <taxon>Rhabditina</taxon>
        <taxon>Rhabditomorpha</taxon>
        <taxon>Rhabditoidea</taxon>
        <taxon>Rhabditidae</taxon>
        <taxon>Peloderinae</taxon>
        <taxon>Caenorhabditis</taxon>
    </lineage>
</organism>
<keyword id="KW-1185">Reference proteome</keyword>
<accession>Q21827</accession>
<protein>
    <recommendedName>
        <fullName evidence="4">G patch domain-containing protein 1 homolog</fullName>
    </recommendedName>
</protein>
<gene>
    <name evidence="4" type="primary">gpch-1</name>
    <name evidence="4" type="ORF">R07E5.1</name>
</gene>
<name>GPTC1_CAEEL</name>
<sequence length="812" mass="92630">MNRKKLAAYGQEFEDDDEEGSSVSKKPTQIHEEIATDEKGKRRFHGAFTGGFSAGYWNTVGSKQGWVPQVFSSSRNERGEQIKQRAEDFMDAEDLGEYGIGNRSIKQTAAFGEGAGQKRKMAWERDTTSISTITQMFEDVVKPVSNSIGVRMLRSMGWREGRGIGLANVKQKQKRGGESSEAQFDREQASKVAPAYEFSNEDALVKQLTPLTGTHGIGYQGLRKTTVLNESYGRTTLALKSGKKNSKGIKGQAFGVGAFEEEDESVYSNYDLSQFDFSLDVAGASEESNLKTQKLVTAFELQPKRLNPRKFYAPPRVPPNFRGDHRPIPMDISKLPQMMKNDVKHMNAEQRAKFLGEDRVNALEIGGKSSKKPTERRSRWDIKANEVEKRDNERGGGEAEEDRDRRQRNRIEFPDEPMRQARFKEFLHYIRRGLPYPQPTDLTVWEWEWEKKEFESKLTSDERGMLPEVQSRAQPLAKTAIAAPIHEMMASKFVKEAGGDLKVGTKDEDKLAAVKMEMFGEKTRQSFDWYPDNLLAKRFNVPHPYPGSDTVGVPALQKTDWKRKDRLADIGGVSATLGLPNTANEIEMRERLLKSRAQRGAEEKKRNQSDDDDEKEYDDKDSDEEEENEAEPNNQKVDKAPKSFFDFIFGDGDGADSDESNSEDEEAEEKERQEILKKREEDLKRRREIVEKKEEENRKRVEKELKELENRDLLRVSKQQEDDDIQIIDETSASSFGPALPPSSKPVLSKTEVLKLLEKNMKKKKKDKKEKEKKKKSKKSKKSKKEKKTKRKHSSSSADDSGDNSDGWEEKK</sequence>
<dbReference type="EMBL" id="Z32683">
    <property type="protein sequence ID" value="CAA83621.1"/>
    <property type="molecule type" value="Genomic_DNA"/>
</dbReference>
<dbReference type="PIR" id="S43604">
    <property type="entry name" value="S43604"/>
</dbReference>
<dbReference type="RefSeq" id="NP_497893.1">
    <property type="nucleotide sequence ID" value="NM_065492.5"/>
</dbReference>
<dbReference type="BioGRID" id="40810">
    <property type="interactions" value="6"/>
</dbReference>
<dbReference type="FunCoup" id="Q21827">
    <property type="interactions" value="2561"/>
</dbReference>
<dbReference type="IntAct" id="Q21827">
    <property type="interactions" value="3"/>
</dbReference>
<dbReference type="STRING" id="6239.R07E5.1.1"/>
<dbReference type="PaxDb" id="6239-R07E5.1"/>
<dbReference type="PeptideAtlas" id="Q21827"/>
<dbReference type="EnsemblMetazoa" id="R07E5.1.1">
    <property type="protein sequence ID" value="R07E5.1.1"/>
    <property type="gene ID" value="WBGene00011109"/>
</dbReference>
<dbReference type="GeneID" id="175574"/>
<dbReference type="KEGG" id="cel:CELE_R07E5.1"/>
<dbReference type="UCSC" id="R07E5.1">
    <property type="organism name" value="c. elegans"/>
</dbReference>
<dbReference type="AGR" id="WB:WBGene00011109"/>
<dbReference type="CTD" id="175574"/>
<dbReference type="WormBase" id="R07E5.1">
    <property type="protein sequence ID" value="CE00658"/>
    <property type="gene ID" value="WBGene00011109"/>
    <property type="gene designation" value="gpch-1"/>
</dbReference>
<dbReference type="eggNOG" id="KOG2138">
    <property type="taxonomic scope" value="Eukaryota"/>
</dbReference>
<dbReference type="GeneTree" id="ENSGT00390000007074"/>
<dbReference type="HOGENOM" id="CLU_008613_1_0_1"/>
<dbReference type="InParanoid" id="Q21827"/>
<dbReference type="OMA" id="DQQKPDT"/>
<dbReference type="OrthoDB" id="20507at2759"/>
<dbReference type="PhylomeDB" id="Q21827"/>
<dbReference type="Reactome" id="R-CEL-72163">
    <property type="pathway name" value="mRNA Splicing - Major Pathway"/>
</dbReference>
<dbReference type="PRO" id="PR:Q21827"/>
<dbReference type="Proteomes" id="UP000001940">
    <property type="component" value="Chromosome III"/>
</dbReference>
<dbReference type="Bgee" id="WBGene00011109">
    <property type="expression patterns" value="Expressed in germ line (C elegans) and 4 other cell types or tissues"/>
</dbReference>
<dbReference type="GO" id="GO:0005634">
    <property type="term" value="C:nucleus"/>
    <property type="evidence" value="ECO:0000318"/>
    <property type="project" value="GO_Central"/>
</dbReference>
<dbReference type="GO" id="GO:0003723">
    <property type="term" value="F:RNA binding"/>
    <property type="evidence" value="ECO:0000318"/>
    <property type="project" value="GO_Central"/>
</dbReference>
<dbReference type="GO" id="GO:0006397">
    <property type="term" value="P:mRNA processing"/>
    <property type="evidence" value="ECO:0007669"/>
    <property type="project" value="InterPro"/>
</dbReference>
<dbReference type="InterPro" id="IPR011666">
    <property type="entry name" value="DUF1604"/>
</dbReference>
<dbReference type="InterPro" id="IPR000467">
    <property type="entry name" value="G_patch_dom"/>
</dbReference>
<dbReference type="PANTHER" id="PTHR13384">
    <property type="entry name" value="G PATCH DOMAIN-CONTAINING PROTEIN 1"/>
    <property type="match status" value="1"/>
</dbReference>
<dbReference type="PANTHER" id="PTHR13384:SF19">
    <property type="entry name" value="G PATCH DOMAIN-CONTAINING PROTEIN 1"/>
    <property type="match status" value="1"/>
</dbReference>
<dbReference type="Pfam" id="PF07713">
    <property type="entry name" value="DUF1604"/>
    <property type="match status" value="1"/>
</dbReference>
<dbReference type="Pfam" id="PF01585">
    <property type="entry name" value="G-patch"/>
    <property type="match status" value="1"/>
</dbReference>
<dbReference type="SMART" id="SM00443">
    <property type="entry name" value="G_patch"/>
    <property type="match status" value="1"/>
</dbReference>
<dbReference type="PROSITE" id="PS50174">
    <property type="entry name" value="G_PATCH"/>
    <property type="match status" value="1"/>
</dbReference>
<evidence type="ECO:0000255" key="1">
    <source>
        <dbReference type="PROSITE-ProRule" id="PRU00092"/>
    </source>
</evidence>
<evidence type="ECO:0000256" key="2">
    <source>
        <dbReference type="SAM" id="MobiDB-lite"/>
    </source>
</evidence>
<evidence type="ECO:0000305" key="3"/>
<evidence type="ECO:0000312" key="4">
    <source>
        <dbReference type="WormBase" id="R07E5.1"/>
    </source>
</evidence>
<feature type="chain" id="PRO_0000287459" description="G patch domain-containing protein 1 homolog">
    <location>
        <begin position="1"/>
        <end position="812"/>
    </location>
</feature>
<feature type="domain" description="G-patch" evidence="1">
    <location>
        <begin position="145"/>
        <end position="191"/>
    </location>
</feature>
<feature type="region of interest" description="Disordered" evidence="2">
    <location>
        <begin position="1"/>
        <end position="42"/>
    </location>
</feature>
<feature type="region of interest" description="Disordered" evidence="2">
    <location>
        <begin position="384"/>
        <end position="416"/>
    </location>
</feature>
<feature type="region of interest" description="Disordered" evidence="2">
    <location>
        <begin position="584"/>
        <end position="812"/>
    </location>
</feature>
<feature type="compositionally biased region" description="Basic and acidic residues" evidence="2">
    <location>
        <begin position="29"/>
        <end position="40"/>
    </location>
</feature>
<feature type="compositionally biased region" description="Basic and acidic residues" evidence="2">
    <location>
        <begin position="586"/>
        <end position="609"/>
    </location>
</feature>
<feature type="compositionally biased region" description="Acidic residues" evidence="2">
    <location>
        <begin position="610"/>
        <end position="630"/>
    </location>
</feature>
<feature type="compositionally biased region" description="Acidic residues" evidence="2">
    <location>
        <begin position="653"/>
        <end position="668"/>
    </location>
</feature>
<feature type="compositionally biased region" description="Basic and acidic residues" evidence="2">
    <location>
        <begin position="669"/>
        <end position="720"/>
    </location>
</feature>
<feature type="compositionally biased region" description="Basic residues" evidence="2">
    <location>
        <begin position="761"/>
        <end position="794"/>
    </location>
</feature>
<feature type="compositionally biased region" description="Acidic residues" evidence="2">
    <location>
        <begin position="800"/>
        <end position="812"/>
    </location>
</feature>
<comment type="interaction">
    <interactant intactId="EBI-2412202">
        <id>Q21827</id>
    </interactant>
    <interactant intactId="EBI-2417030">
        <id>Q19986</id>
        <label>wdr-83</label>
    </interactant>
    <organismsDiffer>false</organismsDiffer>
    <experiments>4</experiments>
</comment>
<comment type="similarity">
    <text evidence="3">Belongs to the GPATCH1 family.</text>
</comment>
<proteinExistence type="evidence at protein level"/>
<reference key="1">
    <citation type="journal article" date="1998" name="Science">
        <title>Genome sequence of the nematode C. elegans: a platform for investigating biology.</title>
        <authorList>
            <consortium name="The C. elegans sequencing consortium"/>
        </authorList>
    </citation>
    <scope>NUCLEOTIDE SEQUENCE [LARGE SCALE GENOMIC DNA]</scope>
    <source>
        <strain>Bristol N2</strain>
    </source>
</reference>